<comment type="function">
    <text evidence="1">This is one of the proteins that bind and probably mediate the attachment of the 5S RNA into the large ribosomal subunit, where it forms part of the central protuberance.</text>
</comment>
<comment type="subunit">
    <text evidence="1">Part of the 50S ribosomal subunit; part of the 5S rRNA/L5/L18/L25 subcomplex. Contacts the 5S and 23S rRNAs.</text>
</comment>
<comment type="similarity">
    <text evidence="1">Belongs to the universal ribosomal protein uL18 family.</text>
</comment>
<sequence length="119" mass="12995">MAKHVTTREKRRARIRRKISGTELRPRLTIYKSLKHMYAQLVDDVAGKTLVSVATTSKALKGELGDEDKTGAAKKVGEALAKAAKAKGIEQVVFDRNGFDYHGRVEAVAAAAREAGLKF</sequence>
<gene>
    <name evidence="1" type="primary">rplR</name>
    <name type="ordered locus">Adeh_1930</name>
</gene>
<dbReference type="EMBL" id="CP000251">
    <property type="protein sequence ID" value="ABC81701.1"/>
    <property type="molecule type" value="Genomic_DNA"/>
</dbReference>
<dbReference type="RefSeq" id="WP_011420984.1">
    <property type="nucleotide sequence ID" value="NC_007760.1"/>
</dbReference>
<dbReference type="SMR" id="Q2IJ74"/>
<dbReference type="STRING" id="290397.Adeh_1930"/>
<dbReference type="KEGG" id="ade:Adeh_1930"/>
<dbReference type="eggNOG" id="COG0256">
    <property type="taxonomic scope" value="Bacteria"/>
</dbReference>
<dbReference type="HOGENOM" id="CLU_098841_0_1_7"/>
<dbReference type="OrthoDB" id="9810939at2"/>
<dbReference type="Proteomes" id="UP000001935">
    <property type="component" value="Chromosome"/>
</dbReference>
<dbReference type="GO" id="GO:0022625">
    <property type="term" value="C:cytosolic large ribosomal subunit"/>
    <property type="evidence" value="ECO:0007669"/>
    <property type="project" value="TreeGrafter"/>
</dbReference>
<dbReference type="GO" id="GO:0008097">
    <property type="term" value="F:5S rRNA binding"/>
    <property type="evidence" value="ECO:0007669"/>
    <property type="project" value="TreeGrafter"/>
</dbReference>
<dbReference type="GO" id="GO:0003735">
    <property type="term" value="F:structural constituent of ribosome"/>
    <property type="evidence" value="ECO:0007669"/>
    <property type="project" value="InterPro"/>
</dbReference>
<dbReference type="GO" id="GO:0006412">
    <property type="term" value="P:translation"/>
    <property type="evidence" value="ECO:0007669"/>
    <property type="project" value="UniProtKB-UniRule"/>
</dbReference>
<dbReference type="CDD" id="cd00432">
    <property type="entry name" value="Ribosomal_L18_L5e"/>
    <property type="match status" value="1"/>
</dbReference>
<dbReference type="FunFam" id="3.30.420.100:FF:000001">
    <property type="entry name" value="50S ribosomal protein L18"/>
    <property type="match status" value="1"/>
</dbReference>
<dbReference type="Gene3D" id="3.30.420.100">
    <property type="match status" value="1"/>
</dbReference>
<dbReference type="HAMAP" id="MF_01337_B">
    <property type="entry name" value="Ribosomal_uL18_B"/>
    <property type="match status" value="1"/>
</dbReference>
<dbReference type="InterPro" id="IPR004389">
    <property type="entry name" value="Ribosomal_uL18_bac-type"/>
</dbReference>
<dbReference type="InterPro" id="IPR005484">
    <property type="entry name" value="Ribosomal_uL18_bac/euk"/>
</dbReference>
<dbReference type="NCBIfam" id="TIGR00060">
    <property type="entry name" value="L18_bact"/>
    <property type="match status" value="1"/>
</dbReference>
<dbReference type="PANTHER" id="PTHR12899">
    <property type="entry name" value="39S RIBOSOMAL PROTEIN L18, MITOCHONDRIAL"/>
    <property type="match status" value="1"/>
</dbReference>
<dbReference type="PANTHER" id="PTHR12899:SF3">
    <property type="entry name" value="LARGE RIBOSOMAL SUBUNIT PROTEIN UL18M"/>
    <property type="match status" value="1"/>
</dbReference>
<dbReference type="Pfam" id="PF00861">
    <property type="entry name" value="Ribosomal_L18p"/>
    <property type="match status" value="1"/>
</dbReference>
<dbReference type="SUPFAM" id="SSF53137">
    <property type="entry name" value="Translational machinery components"/>
    <property type="match status" value="1"/>
</dbReference>
<evidence type="ECO:0000255" key="1">
    <source>
        <dbReference type="HAMAP-Rule" id="MF_01337"/>
    </source>
</evidence>
<evidence type="ECO:0000305" key="2"/>
<name>RL18_ANADE</name>
<protein>
    <recommendedName>
        <fullName evidence="1">Large ribosomal subunit protein uL18</fullName>
    </recommendedName>
    <alternativeName>
        <fullName evidence="2">50S ribosomal protein L18</fullName>
    </alternativeName>
</protein>
<reference key="1">
    <citation type="submission" date="2006-01" db="EMBL/GenBank/DDBJ databases">
        <title>Complete sequence of Anaeromyxobacter dehalogenans 2CP-C.</title>
        <authorList>
            <person name="Copeland A."/>
            <person name="Lucas S."/>
            <person name="Lapidus A."/>
            <person name="Barry K."/>
            <person name="Detter J.C."/>
            <person name="Glavina T."/>
            <person name="Hammon N."/>
            <person name="Israni S."/>
            <person name="Pitluck S."/>
            <person name="Brettin T."/>
            <person name="Bruce D."/>
            <person name="Han C."/>
            <person name="Tapia R."/>
            <person name="Gilna P."/>
            <person name="Kiss H."/>
            <person name="Schmutz J."/>
            <person name="Larimer F."/>
            <person name="Land M."/>
            <person name="Kyrpides N."/>
            <person name="Anderson I."/>
            <person name="Sanford R.A."/>
            <person name="Ritalahti K.M."/>
            <person name="Thomas H.S."/>
            <person name="Kirby J.R."/>
            <person name="Zhulin I.B."/>
            <person name="Loeffler F.E."/>
            <person name="Richardson P."/>
        </authorList>
    </citation>
    <scope>NUCLEOTIDE SEQUENCE [LARGE SCALE GENOMIC DNA]</scope>
    <source>
        <strain>2CP-C</strain>
    </source>
</reference>
<keyword id="KW-1185">Reference proteome</keyword>
<keyword id="KW-0687">Ribonucleoprotein</keyword>
<keyword id="KW-0689">Ribosomal protein</keyword>
<keyword id="KW-0694">RNA-binding</keyword>
<keyword id="KW-0699">rRNA-binding</keyword>
<accession>Q2IJ74</accession>
<feature type="chain" id="PRO_0000251285" description="Large ribosomal subunit protein uL18">
    <location>
        <begin position="1"/>
        <end position="119"/>
    </location>
</feature>
<organism>
    <name type="scientific">Anaeromyxobacter dehalogenans (strain 2CP-C)</name>
    <dbReference type="NCBI Taxonomy" id="290397"/>
    <lineage>
        <taxon>Bacteria</taxon>
        <taxon>Pseudomonadati</taxon>
        <taxon>Myxococcota</taxon>
        <taxon>Myxococcia</taxon>
        <taxon>Myxococcales</taxon>
        <taxon>Cystobacterineae</taxon>
        <taxon>Anaeromyxobacteraceae</taxon>
        <taxon>Anaeromyxobacter</taxon>
    </lineage>
</organism>
<proteinExistence type="inferred from homology"/>